<protein>
    <recommendedName>
        <fullName evidence="1">Cytidine deaminase</fullName>
        <ecNumber evidence="1">3.5.4.5</ecNumber>
    </recommendedName>
    <alternativeName>
        <fullName evidence="1">Cytidine aminohydrolase</fullName>
        <shortName evidence="1">CDA</shortName>
    </alternativeName>
</protein>
<name>CDD_YERP3</name>
<gene>
    <name evidence="1" type="primary">cdd</name>
    <name type="ordered locus">YpsIP31758_2462</name>
</gene>
<proteinExistence type="inferred from homology"/>
<evidence type="ECO:0000255" key="1">
    <source>
        <dbReference type="HAMAP-Rule" id="MF_01558"/>
    </source>
</evidence>
<evidence type="ECO:0000255" key="2">
    <source>
        <dbReference type="PROSITE-ProRule" id="PRU01083"/>
    </source>
</evidence>
<comment type="function">
    <text evidence="1">This enzyme scavenges exogenous and endogenous cytidine and 2'-deoxycytidine for UMP synthesis.</text>
</comment>
<comment type="catalytic activity">
    <reaction evidence="1">
        <text>cytidine + H2O + H(+) = uridine + NH4(+)</text>
        <dbReference type="Rhea" id="RHEA:16069"/>
        <dbReference type="ChEBI" id="CHEBI:15377"/>
        <dbReference type="ChEBI" id="CHEBI:15378"/>
        <dbReference type="ChEBI" id="CHEBI:16704"/>
        <dbReference type="ChEBI" id="CHEBI:17562"/>
        <dbReference type="ChEBI" id="CHEBI:28938"/>
        <dbReference type="EC" id="3.5.4.5"/>
    </reaction>
</comment>
<comment type="catalytic activity">
    <reaction evidence="1">
        <text>2'-deoxycytidine + H2O + H(+) = 2'-deoxyuridine + NH4(+)</text>
        <dbReference type="Rhea" id="RHEA:13433"/>
        <dbReference type="ChEBI" id="CHEBI:15377"/>
        <dbReference type="ChEBI" id="CHEBI:15378"/>
        <dbReference type="ChEBI" id="CHEBI:15698"/>
        <dbReference type="ChEBI" id="CHEBI:16450"/>
        <dbReference type="ChEBI" id="CHEBI:28938"/>
        <dbReference type="EC" id="3.5.4.5"/>
    </reaction>
</comment>
<comment type="cofactor">
    <cofactor evidence="1">
        <name>Zn(2+)</name>
        <dbReference type="ChEBI" id="CHEBI:29105"/>
    </cofactor>
    <text evidence="1">Binds 1 zinc ion.</text>
</comment>
<comment type="subunit">
    <text evidence="1">Homodimer.</text>
</comment>
<comment type="similarity">
    <text evidence="1">Belongs to the cytidine and deoxycytidylate deaminase family.</text>
</comment>
<dbReference type="EC" id="3.5.4.5" evidence="1"/>
<dbReference type="EMBL" id="CP000720">
    <property type="protein sequence ID" value="ABS45977.1"/>
    <property type="molecule type" value="Genomic_DNA"/>
</dbReference>
<dbReference type="RefSeq" id="WP_002211969.1">
    <property type="nucleotide sequence ID" value="NC_009708.1"/>
</dbReference>
<dbReference type="SMR" id="A7FJK3"/>
<dbReference type="GeneID" id="57977056"/>
<dbReference type="KEGG" id="ypi:YpsIP31758_2462"/>
<dbReference type="HOGENOM" id="CLU_052424_0_0_6"/>
<dbReference type="Proteomes" id="UP000002412">
    <property type="component" value="Chromosome"/>
</dbReference>
<dbReference type="GO" id="GO:0005829">
    <property type="term" value="C:cytosol"/>
    <property type="evidence" value="ECO:0007669"/>
    <property type="project" value="TreeGrafter"/>
</dbReference>
<dbReference type="GO" id="GO:0004126">
    <property type="term" value="F:cytidine deaminase activity"/>
    <property type="evidence" value="ECO:0007669"/>
    <property type="project" value="UniProtKB-UniRule"/>
</dbReference>
<dbReference type="GO" id="GO:0042802">
    <property type="term" value="F:identical protein binding"/>
    <property type="evidence" value="ECO:0007669"/>
    <property type="project" value="UniProtKB-ARBA"/>
</dbReference>
<dbReference type="GO" id="GO:0008270">
    <property type="term" value="F:zinc ion binding"/>
    <property type="evidence" value="ECO:0007669"/>
    <property type="project" value="UniProtKB-UniRule"/>
</dbReference>
<dbReference type="GO" id="GO:0009972">
    <property type="term" value="P:cytidine deamination"/>
    <property type="evidence" value="ECO:0007669"/>
    <property type="project" value="InterPro"/>
</dbReference>
<dbReference type="CDD" id="cd01283">
    <property type="entry name" value="cytidine_deaminase"/>
    <property type="match status" value="2"/>
</dbReference>
<dbReference type="FunFam" id="3.40.140.10:FF:000006">
    <property type="entry name" value="Cytidine deaminase"/>
    <property type="match status" value="1"/>
</dbReference>
<dbReference type="FunFam" id="3.40.140.10:FF:000007">
    <property type="entry name" value="Cytidine deaminase"/>
    <property type="match status" value="1"/>
</dbReference>
<dbReference type="Gene3D" id="3.40.140.10">
    <property type="entry name" value="Cytidine Deaminase, domain 2"/>
    <property type="match status" value="2"/>
</dbReference>
<dbReference type="HAMAP" id="MF_01558">
    <property type="entry name" value="Cyt_deam"/>
    <property type="match status" value="1"/>
</dbReference>
<dbReference type="InterPro" id="IPR016192">
    <property type="entry name" value="APOBEC/CMP_deaminase_Zn-bd"/>
</dbReference>
<dbReference type="InterPro" id="IPR002125">
    <property type="entry name" value="CMP_dCMP_dom"/>
</dbReference>
<dbReference type="InterPro" id="IPR013171">
    <property type="entry name" value="Cyd/dCyd_deaminase_Zn-bd"/>
</dbReference>
<dbReference type="InterPro" id="IPR050202">
    <property type="entry name" value="Cyt/Deoxycyt_deaminase"/>
</dbReference>
<dbReference type="InterPro" id="IPR006263">
    <property type="entry name" value="Cyt_deam_dimer"/>
</dbReference>
<dbReference type="InterPro" id="IPR016193">
    <property type="entry name" value="Cytidine_deaminase-like"/>
</dbReference>
<dbReference type="InterPro" id="IPR020797">
    <property type="entry name" value="Cytidine_deaminase_bacteria"/>
</dbReference>
<dbReference type="NCBIfam" id="TIGR01355">
    <property type="entry name" value="cyt_deam_dimer"/>
    <property type="match status" value="1"/>
</dbReference>
<dbReference type="NCBIfam" id="NF006537">
    <property type="entry name" value="PRK09027.1"/>
    <property type="match status" value="1"/>
</dbReference>
<dbReference type="PANTHER" id="PTHR11644">
    <property type="entry name" value="CYTIDINE DEAMINASE"/>
    <property type="match status" value="1"/>
</dbReference>
<dbReference type="PANTHER" id="PTHR11644:SF2">
    <property type="entry name" value="CYTIDINE DEAMINASE"/>
    <property type="match status" value="1"/>
</dbReference>
<dbReference type="Pfam" id="PF00383">
    <property type="entry name" value="dCMP_cyt_deam_1"/>
    <property type="match status" value="1"/>
</dbReference>
<dbReference type="Pfam" id="PF08211">
    <property type="entry name" value="dCMP_cyt_deam_2"/>
    <property type="match status" value="1"/>
</dbReference>
<dbReference type="PIRSF" id="PIRSF006334">
    <property type="entry name" value="Cdd_plus_pseudo"/>
    <property type="match status" value="1"/>
</dbReference>
<dbReference type="SUPFAM" id="SSF53927">
    <property type="entry name" value="Cytidine deaminase-like"/>
    <property type="match status" value="2"/>
</dbReference>
<dbReference type="PROSITE" id="PS00903">
    <property type="entry name" value="CYT_DCMP_DEAMINASES_1"/>
    <property type="match status" value="1"/>
</dbReference>
<dbReference type="PROSITE" id="PS51747">
    <property type="entry name" value="CYT_DCMP_DEAMINASES_2"/>
    <property type="match status" value="2"/>
</dbReference>
<feature type="chain" id="PRO_1000068972" description="Cytidine deaminase">
    <location>
        <begin position="1"/>
        <end position="294"/>
    </location>
</feature>
<feature type="domain" description="CMP/dCMP-type deaminase 1" evidence="2">
    <location>
        <begin position="48"/>
        <end position="168"/>
    </location>
</feature>
<feature type="domain" description="CMP/dCMP-type deaminase 2" evidence="2">
    <location>
        <begin position="187"/>
        <end position="294"/>
    </location>
</feature>
<feature type="active site" description="Proton donor" evidence="1">
    <location>
        <position position="104"/>
    </location>
</feature>
<feature type="binding site" evidence="1">
    <location>
        <begin position="89"/>
        <end position="91"/>
    </location>
    <ligand>
        <name>substrate</name>
    </ligand>
</feature>
<feature type="binding site" evidence="1">
    <location>
        <position position="102"/>
    </location>
    <ligand>
        <name>Zn(2+)</name>
        <dbReference type="ChEBI" id="CHEBI:29105"/>
        <note>catalytic</note>
    </ligand>
</feature>
<feature type="binding site" evidence="1">
    <location>
        <position position="129"/>
    </location>
    <ligand>
        <name>Zn(2+)</name>
        <dbReference type="ChEBI" id="CHEBI:29105"/>
        <note>catalytic</note>
    </ligand>
</feature>
<feature type="binding site" evidence="1">
    <location>
        <position position="132"/>
    </location>
    <ligand>
        <name>Zn(2+)</name>
        <dbReference type="ChEBI" id="CHEBI:29105"/>
        <note>catalytic</note>
    </ligand>
</feature>
<organism>
    <name type="scientific">Yersinia pseudotuberculosis serotype O:1b (strain IP 31758)</name>
    <dbReference type="NCBI Taxonomy" id="349747"/>
    <lineage>
        <taxon>Bacteria</taxon>
        <taxon>Pseudomonadati</taxon>
        <taxon>Pseudomonadota</taxon>
        <taxon>Gammaproteobacteria</taxon>
        <taxon>Enterobacterales</taxon>
        <taxon>Yersiniaceae</taxon>
        <taxon>Yersinia</taxon>
    </lineage>
</organism>
<reference key="1">
    <citation type="journal article" date="2007" name="PLoS Genet.">
        <title>The complete genome sequence of Yersinia pseudotuberculosis IP31758, the causative agent of Far East scarlet-like fever.</title>
        <authorList>
            <person name="Eppinger M."/>
            <person name="Rosovitz M.J."/>
            <person name="Fricke W.F."/>
            <person name="Rasko D.A."/>
            <person name="Kokorina G."/>
            <person name="Fayolle C."/>
            <person name="Lindler L.E."/>
            <person name="Carniel E."/>
            <person name="Ravel J."/>
        </authorList>
    </citation>
    <scope>NUCLEOTIDE SEQUENCE [LARGE SCALE GENOMIC DNA]</scope>
    <source>
        <strain>IP 31758</strain>
    </source>
</reference>
<accession>A7FJK3</accession>
<keyword id="KW-0378">Hydrolase</keyword>
<keyword id="KW-0479">Metal-binding</keyword>
<keyword id="KW-0862">Zinc</keyword>
<sequence length="294" mass="31477">MQARFHTSWAELPASLQFALEPILSAENFPAMLTAEQVKTVKNISGLDDDALAFALLPLATACALTPISHFNVGAIARGKSGNFYFGANMEFRGVPLQQTIHAEQCAVTHAWLRGETNLVAITVNYTPCGHCRQFMNELNSGSELHIHLPGRPPSTLGQYLPDSFGPTDLAITTLLMDPVNHGYTLAETDPLTQAALNAANHSHAPYSQSHSGVALETTNGKIYAGRYAENAAFNPSLPPLQAALILANITGENCASIRRAVLVEGHNAVTSQWDTTLATLNALGCSAVKRVTF</sequence>